<evidence type="ECO:0000250" key="1"/>
<evidence type="ECO:0000250" key="2">
    <source>
        <dbReference type="UniProtKB" id="Q9D020"/>
    </source>
</evidence>
<evidence type="ECO:0000250" key="3">
    <source>
        <dbReference type="UniProtKB" id="Q9H0P0"/>
    </source>
</evidence>
<evidence type="ECO:0000250" key="4">
    <source>
        <dbReference type="UniProtKB" id="Q9W197"/>
    </source>
</evidence>
<evidence type="ECO:0000305" key="5"/>
<protein>
    <recommendedName>
        <fullName evidence="4">7-methylguanosine phosphate-specific 5'-nucleotidase B</fullName>
        <shortName>7-methylguanosine nucleotidase B</shortName>
        <ecNumber evidence="4">3.1.3.91</ecNumber>
    </recommendedName>
    <alternativeName>
        <fullName>Cytosolic 5'-nucleotidase 3B-B</fullName>
    </alternativeName>
    <alternativeName>
        <fullName evidence="4">Cytosolic 5'-nucleotidase III-like protein B</fullName>
        <shortName>cN-III-like protein B</shortName>
        <ecNumber evidence="4">3.1.3.5</ecNumber>
    </alternativeName>
    <alternativeName>
        <fullName>N(7)-methylguanylate 5'-phosphatase B</fullName>
    </alternativeName>
</protein>
<comment type="function">
    <text evidence="1">Specifically hydrolyzes 7-methylguanosine monophosphate (m(7)GMP) to 7-methylguanosine and inorganic phosphate. The specific activity for m(7)GMP may protect cells against undesired salvage of m(7)GMP and its incorporation into nucleic acids. Also has weak activity for CMP. UMP and purine nucleotides are poor substrates (By similarity).</text>
</comment>
<comment type="catalytic activity">
    <reaction evidence="4">
        <text>N(7)-methyl-GMP + H2O = N(7)-methylguanosine + phosphate</text>
        <dbReference type="Rhea" id="RHEA:37107"/>
        <dbReference type="ChEBI" id="CHEBI:15377"/>
        <dbReference type="ChEBI" id="CHEBI:20794"/>
        <dbReference type="ChEBI" id="CHEBI:43474"/>
        <dbReference type="ChEBI" id="CHEBI:58285"/>
        <dbReference type="EC" id="3.1.3.91"/>
    </reaction>
</comment>
<comment type="catalytic activity">
    <reaction evidence="4">
        <text>CMP + H2O = cytidine + phosphate</text>
        <dbReference type="Rhea" id="RHEA:29367"/>
        <dbReference type="ChEBI" id="CHEBI:15377"/>
        <dbReference type="ChEBI" id="CHEBI:17562"/>
        <dbReference type="ChEBI" id="CHEBI:43474"/>
        <dbReference type="ChEBI" id="CHEBI:60377"/>
        <dbReference type="EC" id="3.1.3.91"/>
    </reaction>
</comment>
<comment type="catalytic activity">
    <reaction evidence="4">
        <text>a ribonucleoside 5'-phosphate + H2O = a ribonucleoside + phosphate</text>
        <dbReference type="Rhea" id="RHEA:12484"/>
        <dbReference type="ChEBI" id="CHEBI:15377"/>
        <dbReference type="ChEBI" id="CHEBI:18254"/>
        <dbReference type="ChEBI" id="CHEBI:43474"/>
        <dbReference type="ChEBI" id="CHEBI:58043"/>
        <dbReference type="EC" id="3.1.3.5"/>
    </reaction>
</comment>
<comment type="subunit">
    <text evidence="1">Monomer.</text>
</comment>
<comment type="subcellular location">
    <subcellularLocation>
        <location evidence="5">Cytoplasm</location>
    </subcellularLocation>
</comment>
<comment type="similarity">
    <text evidence="5">Belongs to the pyrimidine 5'-nucleotidase family.</text>
</comment>
<reference key="1">
    <citation type="submission" date="2005-12" db="EMBL/GenBank/DDBJ databases">
        <authorList>
            <consortium name="NIH - Xenopus Gene Collection (XGC) project"/>
        </authorList>
    </citation>
    <scope>NUCLEOTIDE SEQUENCE [LARGE SCALE MRNA]</scope>
    <source>
        <tissue>Oocyte</tissue>
    </source>
</reference>
<organism>
    <name type="scientific">Xenopus laevis</name>
    <name type="common">African clawed frog</name>
    <dbReference type="NCBI Taxonomy" id="8355"/>
    <lineage>
        <taxon>Eukaryota</taxon>
        <taxon>Metazoa</taxon>
        <taxon>Chordata</taxon>
        <taxon>Craniata</taxon>
        <taxon>Vertebrata</taxon>
        <taxon>Euteleostomi</taxon>
        <taxon>Amphibia</taxon>
        <taxon>Batrachia</taxon>
        <taxon>Anura</taxon>
        <taxon>Pipoidea</taxon>
        <taxon>Pipidae</taxon>
        <taxon>Xenopodinae</taxon>
        <taxon>Xenopus</taxon>
        <taxon>Xenopus</taxon>
    </lineage>
</organism>
<accession>Q2TAG6</accession>
<proteinExistence type="evidence at transcript level"/>
<feature type="chain" id="PRO_0000328954" description="7-methylguanosine phosphate-specific 5'-nucleotidase B">
    <location>
        <begin position="1"/>
        <end position="290"/>
    </location>
</feature>
<feature type="active site" description="Nucleophile" evidence="4">
    <location>
        <position position="39"/>
    </location>
</feature>
<feature type="active site" description="Proton donor" evidence="4">
    <location>
        <position position="41"/>
    </location>
</feature>
<feature type="binding site" evidence="4">
    <location>
        <position position="39"/>
    </location>
    <ligand>
        <name>Mg(2+)</name>
        <dbReference type="ChEBI" id="CHEBI:18420"/>
    </ligand>
</feature>
<feature type="binding site" evidence="4">
    <location>
        <position position="41"/>
    </location>
    <ligand>
        <name>Mg(2+)</name>
        <dbReference type="ChEBI" id="CHEBI:18420"/>
    </ligand>
</feature>
<feature type="binding site" evidence="4">
    <location>
        <position position="86"/>
    </location>
    <ligand>
        <name>CMP</name>
        <dbReference type="ChEBI" id="CHEBI:60377"/>
    </ligand>
</feature>
<feature type="binding site" evidence="4">
    <location>
        <position position="86"/>
    </location>
    <ligand>
        <name>N(7)-methyl-GMP</name>
        <dbReference type="ChEBI" id="CHEBI:58285"/>
    </ligand>
</feature>
<feature type="binding site" evidence="3">
    <location>
        <begin position="154"/>
        <end position="155"/>
    </location>
    <ligand>
        <name>substrate</name>
    </ligand>
</feature>
<feature type="binding site" evidence="2">
    <location>
        <position position="203"/>
    </location>
    <ligand>
        <name>substrate</name>
    </ligand>
</feature>
<feature type="binding site" evidence="4">
    <location>
        <position position="228"/>
    </location>
    <ligand>
        <name>Mg(2+)</name>
        <dbReference type="ChEBI" id="CHEBI:18420"/>
    </ligand>
</feature>
<name>5N3BB_XENLA</name>
<keyword id="KW-0963">Cytoplasm</keyword>
<keyword id="KW-0378">Hydrolase</keyword>
<keyword id="KW-0460">Magnesium</keyword>
<keyword id="KW-0479">Metal-binding</keyword>
<keyword id="KW-0546">Nucleotide metabolism</keyword>
<keyword id="KW-0547">Nucleotide-binding</keyword>
<keyword id="KW-1185">Reference proteome</keyword>
<gene>
    <name type="primary">Nt5c3b-b</name>
    <name type="synonym">Nt5c3l-b</name>
</gene>
<sequence length="290" mass="33537">MRLPVLGKDTVRMRDPEGLQDKITRIQRGGQEKLQIISDFDMTLSRFSRNGERCPTCYNIIDNSNIISDEGRKKLKCLFDIYYPLEIDPKKSIEEKYPLMVEWWSKAHDLFYEQRIQKDRLAQVVKEPQATLRDGYDLFFNNLYQREIPLFIFSAGIGDVLEEIIRQAGVFHPNTKVVSNYMDFDDNGILTGFKGDLIHTYNKNSSVLKDTEYFKEISHRTNILLLGDTLGDLTMADGVSTVENIIKIGFLNDKVEELTEQFLQSYDIVLLRDETLDVVNGILQFVTAKN</sequence>
<dbReference type="EC" id="3.1.3.91" evidence="4"/>
<dbReference type="EC" id="3.1.3.5" evidence="4"/>
<dbReference type="EMBL" id="BC110937">
    <property type="protein sequence ID" value="AAI10938.1"/>
    <property type="molecule type" value="mRNA"/>
</dbReference>
<dbReference type="RefSeq" id="NP_001082544.1">
    <property type="nucleotide sequence ID" value="NM_001089075.1"/>
</dbReference>
<dbReference type="SMR" id="Q2TAG6"/>
<dbReference type="DNASU" id="398553"/>
<dbReference type="GeneID" id="398553"/>
<dbReference type="KEGG" id="xla:398553"/>
<dbReference type="AGR" id="Xenbase:XB-GENE-992511"/>
<dbReference type="CTD" id="398553"/>
<dbReference type="OrthoDB" id="10014216at2759"/>
<dbReference type="Proteomes" id="UP000186698">
    <property type="component" value="Chromosome 9_10L"/>
</dbReference>
<dbReference type="Bgee" id="398553">
    <property type="expression patterns" value="Expressed in liver and 19 other cell types or tissues"/>
</dbReference>
<dbReference type="GO" id="GO:0005737">
    <property type="term" value="C:cytoplasm"/>
    <property type="evidence" value="ECO:0000318"/>
    <property type="project" value="GO_Central"/>
</dbReference>
<dbReference type="GO" id="GO:0016787">
    <property type="term" value="F:hydrolase activity"/>
    <property type="evidence" value="ECO:0007669"/>
    <property type="project" value="UniProtKB-KW"/>
</dbReference>
<dbReference type="GO" id="GO:0000287">
    <property type="term" value="F:magnesium ion binding"/>
    <property type="evidence" value="ECO:0007669"/>
    <property type="project" value="InterPro"/>
</dbReference>
<dbReference type="GO" id="GO:0000166">
    <property type="term" value="F:nucleotide binding"/>
    <property type="evidence" value="ECO:0007669"/>
    <property type="project" value="UniProtKB-KW"/>
</dbReference>
<dbReference type="GO" id="GO:0009117">
    <property type="term" value="P:nucleotide metabolic process"/>
    <property type="evidence" value="ECO:0007669"/>
    <property type="project" value="UniProtKB-KW"/>
</dbReference>
<dbReference type="CDD" id="cd07504">
    <property type="entry name" value="HAD_5NT"/>
    <property type="match status" value="1"/>
</dbReference>
<dbReference type="FunFam" id="1.10.150.340:FF:000001">
    <property type="entry name" value="Cytosolic 5-nucleotidase 3-like"/>
    <property type="match status" value="1"/>
</dbReference>
<dbReference type="FunFam" id="3.40.50.1000:FF:000032">
    <property type="entry name" value="Cytosolic 5-nucleotidase 3-like"/>
    <property type="match status" value="1"/>
</dbReference>
<dbReference type="Gene3D" id="3.40.50.1000">
    <property type="entry name" value="HAD superfamily/HAD-like"/>
    <property type="match status" value="1"/>
</dbReference>
<dbReference type="Gene3D" id="1.10.150.340">
    <property type="entry name" value="Pyrimidine 5'-nucleotidase (UMPH-1), N-terminal domain"/>
    <property type="match status" value="1"/>
</dbReference>
<dbReference type="InterPro" id="IPR036412">
    <property type="entry name" value="HAD-like_sf"/>
</dbReference>
<dbReference type="InterPro" id="IPR023214">
    <property type="entry name" value="HAD_sf"/>
</dbReference>
<dbReference type="InterPro" id="IPR006434">
    <property type="entry name" value="Pyrimidine_nucleotidase_eu"/>
</dbReference>
<dbReference type="NCBIfam" id="TIGR01544">
    <property type="entry name" value="HAD-SF-IE"/>
    <property type="match status" value="1"/>
</dbReference>
<dbReference type="PANTHER" id="PTHR13045">
    <property type="entry name" value="5'-NUCLEOTIDASE"/>
    <property type="match status" value="1"/>
</dbReference>
<dbReference type="PANTHER" id="PTHR13045:SF15">
    <property type="entry name" value="7-METHYLGUANOSINE PHOSPHATE-SPECIFIC 5'-NUCLEOTIDASE"/>
    <property type="match status" value="1"/>
</dbReference>
<dbReference type="Pfam" id="PF05822">
    <property type="entry name" value="UMPH-1"/>
    <property type="match status" value="1"/>
</dbReference>
<dbReference type="SFLD" id="SFLDG01128">
    <property type="entry name" value="C1.4:_5'-Nucleotidase_Like"/>
    <property type="match status" value="1"/>
</dbReference>
<dbReference type="SFLD" id="SFLDS00003">
    <property type="entry name" value="Haloacid_Dehalogenase"/>
    <property type="match status" value="1"/>
</dbReference>
<dbReference type="SUPFAM" id="SSF56784">
    <property type="entry name" value="HAD-like"/>
    <property type="match status" value="1"/>
</dbReference>